<name>SERA_HAEIN</name>
<keyword id="KW-0028">Amino-acid biosynthesis</keyword>
<keyword id="KW-0520">NAD</keyword>
<keyword id="KW-0560">Oxidoreductase</keyword>
<keyword id="KW-1185">Reference proteome</keyword>
<keyword id="KW-0718">Serine biosynthesis</keyword>
<accession>P43885</accession>
<evidence type="ECO:0000250" key="1"/>
<evidence type="ECO:0000250" key="2">
    <source>
        <dbReference type="UniProtKB" id="P0A9T0"/>
    </source>
</evidence>
<evidence type="ECO:0000255" key="3">
    <source>
        <dbReference type="PROSITE-ProRule" id="PRU01007"/>
    </source>
</evidence>
<evidence type="ECO:0000305" key="4"/>
<proteinExistence type="inferred from homology"/>
<feature type="chain" id="PRO_0000076002" description="D-3-phosphoglycerate dehydrogenase">
    <location>
        <begin position="1"/>
        <end position="410"/>
    </location>
</feature>
<feature type="domain" description="ACT" evidence="3">
    <location>
        <begin position="341"/>
        <end position="410"/>
    </location>
</feature>
<feature type="active site" evidence="1">
    <location>
        <position position="241"/>
    </location>
</feature>
<feature type="active site" evidence="1">
    <location>
        <position position="270"/>
    </location>
</feature>
<feature type="active site" description="Proton donor" evidence="1">
    <location>
        <position position="293"/>
    </location>
</feature>
<feature type="binding site" evidence="2">
    <location>
        <begin position="162"/>
        <end position="163"/>
    </location>
    <ligand>
        <name>NAD(+)</name>
        <dbReference type="ChEBI" id="CHEBI:57540"/>
    </ligand>
</feature>
<feature type="binding site" evidence="2">
    <location>
        <position position="182"/>
    </location>
    <ligand>
        <name>NAD(+)</name>
        <dbReference type="ChEBI" id="CHEBI:57540"/>
    </ligand>
</feature>
<feature type="binding site" evidence="2">
    <location>
        <begin position="239"/>
        <end position="241"/>
    </location>
    <ligand>
        <name>NAD(+)</name>
        <dbReference type="ChEBI" id="CHEBI:57540"/>
    </ligand>
</feature>
<feature type="binding site" evidence="2">
    <location>
        <position position="265"/>
    </location>
    <ligand>
        <name>NAD(+)</name>
        <dbReference type="ChEBI" id="CHEBI:57540"/>
    </ligand>
</feature>
<feature type="binding site" evidence="2">
    <location>
        <begin position="293"/>
        <end position="296"/>
    </location>
    <ligand>
        <name>NAD(+)</name>
        <dbReference type="ChEBI" id="CHEBI:57540"/>
    </ligand>
</feature>
<sequence length="410" mass="44665">MTNKVSLDKSKIKFVLFEGVHQSALDTLHAAGYTNIDYYKKALDGDELKEAIKDVHFIGLRSRTHLTAEMIEAAPKLIAVGCFCIGTNQVDLNAAKARGIPVFNAPFSNTRSVAELVLGEILLLMRNVPQANAEVHRGVWNKSATGSHEVRGKKLGIIGYGHIGSQLSIIAESLGMDVYFYDIENKLPLGNAKQVRSLEELLSSCDVVSLHVPELPSTKNLMNVARIAQLKQGAILINAARGTVVDIDALAQALKDGKLQGAAIDVFPVEPASINEEFISPLREFDNVILTPHIGGSTAEAQENIGFEVAGKFVKYSDNGSTLSSVNFPEVSLPEHEGTKRLLHIHENRPGILNKLNQIFVEANLNIAAQYLQTDPKIGYVVVDVETNDASPLLTKLKEIDGTIRARVLY</sequence>
<dbReference type="EC" id="1.1.1.95" evidence="2"/>
<dbReference type="EC" id="1.1.1.399" evidence="2"/>
<dbReference type="EMBL" id="L42023">
    <property type="protein sequence ID" value="AAC22124.1"/>
    <property type="molecule type" value="Genomic_DNA"/>
</dbReference>
<dbReference type="PIR" id="C64070">
    <property type="entry name" value="C64070"/>
</dbReference>
<dbReference type="RefSeq" id="NP_438626.1">
    <property type="nucleotide sequence ID" value="NC_000907.1"/>
</dbReference>
<dbReference type="SMR" id="P43885"/>
<dbReference type="STRING" id="71421.HI_0465"/>
<dbReference type="EnsemblBacteria" id="AAC22124">
    <property type="protein sequence ID" value="AAC22124"/>
    <property type="gene ID" value="HI_0465"/>
</dbReference>
<dbReference type="KEGG" id="hin:HI_0465"/>
<dbReference type="PATRIC" id="fig|71421.8.peg.485"/>
<dbReference type="eggNOG" id="COG0111">
    <property type="taxonomic scope" value="Bacteria"/>
</dbReference>
<dbReference type="HOGENOM" id="CLU_019796_9_2_6"/>
<dbReference type="OrthoDB" id="9805416at2"/>
<dbReference type="PhylomeDB" id="P43885"/>
<dbReference type="BioCyc" id="HINF71421:G1GJ1-481-MONOMER"/>
<dbReference type="UniPathway" id="UPA00135">
    <property type="reaction ID" value="UER00196"/>
</dbReference>
<dbReference type="Proteomes" id="UP000000579">
    <property type="component" value="Chromosome"/>
</dbReference>
<dbReference type="GO" id="GO:0051287">
    <property type="term" value="F:NAD binding"/>
    <property type="evidence" value="ECO:0007669"/>
    <property type="project" value="InterPro"/>
</dbReference>
<dbReference type="GO" id="GO:0004617">
    <property type="term" value="F:phosphoglycerate dehydrogenase activity"/>
    <property type="evidence" value="ECO:0007669"/>
    <property type="project" value="UniProtKB-EC"/>
</dbReference>
<dbReference type="GO" id="GO:0006564">
    <property type="term" value="P:L-serine biosynthetic process"/>
    <property type="evidence" value="ECO:0007669"/>
    <property type="project" value="UniProtKB-KW"/>
</dbReference>
<dbReference type="CDD" id="cd04901">
    <property type="entry name" value="ACT_3PGDH"/>
    <property type="match status" value="1"/>
</dbReference>
<dbReference type="CDD" id="cd12176">
    <property type="entry name" value="PGDH_3"/>
    <property type="match status" value="1"/>
</dbReference>
<dbReference type="FunFam" id="3.30.70.260:FF:000007">
    <property type="entry name" value="D-3-phosphoglycerate dehydrogenase"/>
    <property type="match status" value="1"/>
</dbReference>
<dbReference type="FunFam" id="3.40.50.720:FF:000041">
    <property type="entry name" value="D-3-phosphoglycerate dehydrogenase"/>
    <property type="match status" value="1"/>
</dbReference>
<dbReference type="Gene3D" id="3.30.70.260">
    <property type="match status" value="1"/>
</dbReference>
<dbReference type="Gene3D" id="3.40.50.720">
    <property type="entry name" value="NAD(P)-binding Rossmann-like Domain"/>
    <property type="match status" value="2"/>
</dbReference>
<dbReference type="InterPro" id="IPR045865">
    <property type="entry name" value="ACT-like_dom_sf"/>
</dbReference>
<dbReference type="InterPro" id="IPR002912">
    <property type="entry name" value="ACT_dom"/>
</dbReference>
<dbReference type="InterPro" id="IPR054480">
    <property type="entry name" value="AHAS_small-like_ACT"/>
</dbReference>
<dbReference type="InterPro" id="IPR050418">
    <property type="entry name" value="D-iso_2-hydroxyacid_DH_PdxB"/>
</dbReference>
<dbReference type="InterPro" id="IPR006139">
    <property type="entry name" value="D-isomer_2_OHA_DH_cat_dom"/>
</dbReference>
<dbReference type="InterPro" id="IPR029753">
    <property type="entry name" value="D-isomer_DH_CS"/>
</dbReference>
<dbReference type="InterPro" id="IPR029752">
    <property type="entry name" value="D-isomer_DH_CS1"/>
</dbReference>
<dbReference type="InterPro" id="IPR006140">
    <property type="entry name" value="D-isomer_DH_NAD-bd"/>
</dbReference>
<dbReference type="InterPro" id="IPR036291">
    <property type="entry name" value="NAD(P)-bd_dom_sf"/>
</dbReference>
<dbReference type="NCBIfam" id="NF008759">
    <property type="entry name" value="PRK11790.1"/>
    <property type="match status" value="1"/>
</dbReference>
<dbReference type="PANTHER" id="PTHR43761:SF1">
    <property type="entry name" value="D-ISOMER SPECIFIC 2-HYDROXYACID DEHYDROGENASE CATALYTIC DOMAIN-CONTAINING PROTEIN-RELATED"/>
    <property type="match status" value="1"/>
</dbReference>
<dbReference type="PANTHER" id="PTHR43761">
    <property type="entry name" value="D-ISOMER SPECIFIC 2-HYDROXYACID DEHYDROGENASE FAMILY PROTEIN (AFU_ORTHOLOGUE AFUA_1G13630)"/>
    <property type="match status" value="1"/>
</dbReference>
<dbReference type="Pfam" id="PF00389">
    <property type="entry name" value="2-Hacid_dh"/>
    <property type="match status" value="1"/>
</dbReference>
<dbReference type="Pfam" id="PF02826">
    <property type="entry name" value="2-Hacid_dh_C"/>
    <property type="match status" value="1"/>
</dbReference>
<dbReference type="Pfam" id="PF22629">
    <property type="entry name" value="ACT_AHAS_ss"/>
    <property type="match status" value="1"/>
</dbReference>
<dbReference type="SUPFAM" id="SSF55021">
    <property type="entry name" value="ACT-like"/>
    <property type="match status" value="1"/>
</dbReference>
<dbReference type="SUPFAM" id="SSF52283">
    <property type="entry name" value="Formate/glycerate dehydrogenase catalytic domain-like"/>
    <property type="match status" value="1"/>
</dbReference>
<dbReference type="SUPFAM" id="SSF51735">
    <property type="entry name" value="NAD(P)-binding Rossmann-fold domains"/>
    <property type="match status" value="1"/>
</dbReference>
<dbReference type="PROSITE" id="PS51671">
    <property type="entry name" value="ACT"/>
    <property type="match status" value="1"/>
</dbReference>
<dbReference type="PROSITE" id="PS00065">
    <property type="entry name" value="D_2_HYDROXYACID_DH_1"/>
    <property type="match status" value="1"/>
</dbReference>
<dbReference type="PROSITE" id="PS00670">
    <property type="entry name" value="D_2_HYDROXYACID_DH_2"/>
    <property type="match status" value="1"/>
</dbReference>
<dbReference type="PROSITE" id="PS00671">
    <property type="entry name" value="D_2_HYDROXYACID_DH_3"/>
    <property type="match status" value="1"/>
</dbReference>
<protein>
    <recommendedName>
        <fullName>D-3-phosphoglycerate dehydrogenase</fullName>
        <shortName>PGDH</shortName>
        <ecNumber evidence="2">1.1.1.95</ecNumber>
    </recommendedName>
    <alternativeName>
        <fullName evidence="2">2-oxoglutarate reductase</fullName>
        <ecNumber evidence="2">1.1.1.399</ecNumber>
    </alternativeName>
</protein>
<gene>
    <name type="primary">serA</name>
    <name type="ordered locus">HI_0465</name>
</gene>
<organism>
    <name type="scientific">Haemophilus influenzae (strain ATCC 51907 / DSM 11121 / KW20 / Rd)</name>
    <dbReference type="NCBI Taxonomy" id="71421"/>
    <lineage>
        <taxon>Bacteria</taxon>
        <taxon>Pseudomonadati</taxon>
        <taxon>Pseudomonadota</taxon>
        <taxon>Gammaproteobacteria</taxon>
        <taxon>Pasteurellales</taxon>
        <taxon>Pasteurellaceae</taxon>
        <taxon>Haemophilus</taxon>
    </lineage>
</organism>
<comment type="function">
    <text evidence="2">Catalyzes the reversible oxidation of 3-phospho-D-glycerate to 3-phosphonooxypyruvate, the first step of the phosphorylated L-serine biosynthesis pathway. Also catalyzes the reversible oxidation of 2-hydroxyglutarate to 2-oxoglutarate.</text>
</comment>
<comment type="catalytic activity">
    <reaction evidence="2">
        <text>(2R)-3-phosphoglycerate + NAD(+) = 3-phosphooxypyruvate + NADH + H(+)</text>
        <dbReference type="Rhea" id="RHEA:12641"/>
        <dbReference type="ChEBI" id="CHEBI:15378"/>
        <dbReference type="ChEBI" id="CHEBI:18110"/>
        <dbReference type="ChEBI" id="CHEBI:57540"/>
        <dbReference type="ChEBI" id="CHEBI:57945"/>
        <dbReference type="ChEBI" id="CHEBI:58272"/>
        <dbReference type="EC" id="1.1.1.95"/>
    </reaction>
</comment>
<comment type="catalytic activity">
    <reaction evidence="2">
        <text>(R)-2-hydroxyglutarate + NAD(+) = 2-oxoglutarate + NADH + H(+)</text>
        <dbReference type="Rhea" id="RHEA:49612"/>
        <dbReference type="ChEBI" id="CHEBI:15378"/>
        <dbReference type="ChEBI" id="CHEBI:15801"/>
        <dbReference type="ChEBI" id="CHEBI:16810"/>
        <dbReference type="ChEBI" id="CHEBI:57540"/>
        <dbReference type="ChEBI" id="CHEBI:57945"/>
        <dbReference type="EC" id="1.1.1.399"/>
    </reaction>
</comment>
<comment type="activity regulation">
    <text evidence="1">In bacteria displays feedback inhibition by L-serine.</text>
</comment>
<comment type="pathway">
    <text>Amino-acid biosynthesis; L-serine biosynthesis; L-serine from 3-phospho-D-glycerate: step 1/3.</text>
</comment>
<comment type="similarity">
    <text evidence="4">Belongs to the D-isomer specific 2-hydroxyacid dehydrogenase family.</text>
</comment>
<reference key="1">
    <citation type="journal article" date="1995" name="Science">
        <title>Whole-genome random sequencing and assembly of Haemophilus influenzae Rd.</title>
        <authorList>
            <person name="Fleischmann R.D."/>
            <person name="Adams M.D."/>
            <person name="White O."/>
            <person name="Clayton R.A."/>
            <person name="Kirkness E.F."/>
            <person name="Kerlavage A.R."/>
            <person name="Bult C.J."/>
            <person name="Tomb J.-F."/>
            <person name="Dougherty B.A."/>
            <person name="Merrick J.M."/>
            <person name="McKenney K."/>
            <person name="Sutton G.G."/>
            <person name="FitzHugh W."/>
            <person name="Fields C.A."/>
            <person name="Gocayne J.D."/>
            <person name="Scott J.D."/>
            <person name="Shirley R."/>
            <person name="Liu L.-I."/>
            <person name="Glodek A."/>
            <person name="Kelley J.M."/>
            <person name="Weidman J.F."/>
            <person name="Phillips C.A."/>
            <person name="Spriggs T."/>
            <person name="Hedblom E."/>
            <person name="Cotton M.D."/>
            <person name="Utterback T.R."/>
            <person name="Hanna M.C."/>
            <person name="Nguyen D.T."/>
            <person name="Saudek D.M."/>
            <person name="Brandon R.C."/>
            <person name="Fine L.D."/>
            <person name="Fritchman J.L."/>
            <person name="Fuhrmann J.L."/>
            <person name="Geoghagen N.S.M."/>
            <person name="Gnehm C.L."/>
            <person name="McDonald L.A."/>
            <person name="Small K.V."/>
            <person name="Fraser C.M."/>
            <person name="Smith H.O."/>
            <person name="Venter J.C."/>
        </authorList>
    </citation>
    <scope>NUCLEOTIDE SEQUENCE [LARGE SCALE GENOMIC DNA]</scope>
    <source>
        <strain>ATCC 51907 / DSM 11121 / KW20 / Rd</strain>
    </source>
</reference>